<feature type="chain" id="PRO_0000293727" description="Centrosomal protein of 44 kDa">
    <location>
        <begin position="1"/>
        <end position="385"/>
    </location>
</feature>
<feature type="region of interest" description="Binds with microtubules and centrioles" evidence="1">
    <location>
        <begin position="11"/>
        <end position="191"/>
    </location>
</feature>
<feature type="region of interest" description="Disordered" evidence="3">
    <location>
        <begin position="194"/>
        <end position="224"/>
    </location>
</feature>
<feature type="coiled-coil region" evidence="2">
    <location>
        <begin position="224"/>
        <end position="263"/>
    </location>
</feature>
<feature type="coiled-coil region" evidence="2">
    <location>
        <begin position="353"/>
        <end position="379"/>
    </location>
</feature>
<feature type="compositionally biased region" description="Acidic residues" evidence="3">
    <location>
        <begin position="194"/>
        <end position="204"/>
    </location>
</feature>
<name>CEP44_XENTR</name>
<keyword id="KW-0175">Coiled coil</keyword>
<keyword id="KW-0963">Cytoplasm</keyword>
<keyword id="KW-0206">Cytoskeleton</keyword>
<keyword id="KW-1185">Reference proteome</keyword>
<proteinExistence type="evidence at transcript level"/>
<protein>
    <recommendedName>
        <fullName>Centrosomal protein of 44 kDa</fullName>
        <shortName>Cep44</shortName>
    </recommendedName>
</protein>
<gene>
    <name type="primary">cep44</name>
</gene>
<sequence length="385" mass="44039">MATGDVKGCIRKLEQRLRTLNYPRDVDYSGLIKGDPSAFLPIISYTFTCYSTSIAEILISLGIELATKSDLRFIEAVYKVLRDVFNYKPILTKQQFLQCAFSERKIQIICDIVDCVVKKHKEITGQNKIKNQPVKKIVSAKDQCEVFYPEDMFVQLSVKTEMSTQKKPLVERHTGSEFQLQTKCYKSALLEEAEEEEPTSDCEEDSHLQREMGSPFETAEETPNSEQVELLRKQLAECQEKLQRLDCVEERLQSLETSVKGKIIIDETDWNNLLGRVLLLETERLLQSKKSDLPEFARISEHRTSSRMANEICSNLKTKADIPESHHQSSGYSSVLSADTSPIAIDINYSSLTEESKETTKQRMERITKMMEETSELLKFSNNTS</sequence>
<reference key="1">
    <citation type="submission" date="2006-08" db="EMBL/GenBank/DDBJ databases">
        <authorList>
            <consortium name="NIH - Xenopus Gene Collection (XGC) project"/>
        </authorList>
    </citation>
    <scope>NUCLEOTIDE SEQUENCE [LARGE SCALE MRNA]</scope>
    <source>
        <strain>N6</strain>
        <tissue>Ovary</tissue>
    </source>
</reference>
<accession>Q0P4I1</accession>
<dbReference type="EMBL" id="BC122069">
    <property type="protein sequence ID" value="AAI22070.1"/>
    <property type="molecule type" value="mRNA"/>
</dbReference>
<dbReference type="RefSeq" id="NP_001072553.1">
    <property type="nucleotide sequence ID" value="NM_001079085.1"/>
</dbReference>
<dbReference type="SMR" id="Q0P4I1"/>
<dbReference type="FunCoup" id="Q0P4I1">
    <property type="interactions" value="1284"/>
</dbReference>
<dbReference type="STRING" id="8364.ENSXETP00000038544"/>
<dbReference type="PaxDb" id="8364-ENSXETP00000059626"/>
<dbReference type="DNASU" id="780008"/>
<dbReference type="GeneID" id="780008"/>
<dbReference type="KEGG" id="xtr:780008"/>
<dbReference type="AGR" id="Xenbase:XB-GENE-5870163"/>
<dbReference type="CTD" id="80817"/>
<dbReference type="Xenbase" id="XB-GENE-5870163">
    <property type="gene designation" value="cep44"/>
</dbReference>
<dbReference type="eggNOG" id="ENOG502R3RQ">
    <property type="taxonomic scope" value="Eukaryota"/>
</dbReference>
<dbReference type="InParanoid" id="Q0P4I1"/>
<dbReference type="OMA" id="NWMEDKL"/>
<dbReference type="OrthoDB" id="259598at2759"/>
<dbReference type="Proteomes" id="UP000008143">
    <property type="component" value="Chromosome 1"/>
</dbReference>
<dbReference type="GO" id="GO:0005814">
    <property type="term" value="C:centriole"/>
    <property type="evidence" value="ECO:0000250"/>
    <property type="project" value="UniProtKB"/>
</dbReference>
<dbReference type="GO" id="GO:0005813">
    <property type="term" value="C:centrosome"/>
    <property type="evidence" value="ECO:0000250"/>
    <property type="project" value="UniProtKB"/>
</dbReference>
<dbReference type="GO" id="GO:0005737">
    <property type="term" value="C:cytoplasm"/>
    <property type="evidence" value="ECO:0007669"/>
    <property type="project" value="UniProtKB-KW"/>
</dbReference>
<dbReference type="GO" id="GO:0030496">
    <property type="term" value="C:midbody"/>
    <property type="evidence" value="ECO:0007669"/>
    <property type="project" value="UniProtKB-SubCell"/>
</dbReference>
<dbReference type="GO" id="GO:0000922">
    <property type="term" value="C:spindle pole"/>
    <property type="evidence" value="ECO:0000250"/>
    <property type="project" value="UniProtKB"/>
</dbReference>
<dbReference type="GO" id="GO:0008017">
    <property type="term" value="F:microtubule binding"/>
    <property type="evidence" value="ECO:0000250"/>
    <property type="project" value="UniProtKB"/>
</dbReference>
<dbReference type="GO" id="GO:0007099">
    <property type="term" value="P:centriole replication"/>
    <property type="evidence" value="ECO:0000250"/>
    <property type="project" value="UniProtKB"/>
</dbReference>
<dbReference type="GO" id="GO:0010457">
    <property type="term" value="P:centriole-centriole cohesion"/>
    <property type="evidence" value="ECO:0000250"/>
    <property type="project" value="UniProtKB"/>
</dbReference>
<dbReference type="GO" id="GO:0007098">
    <property type="term" value="P:centrosome cycle"/>
    <property type="evidence" value="ECO:0000250"/>
    <property type="project" value="UniProtKB"/>
</dbReference>
<dbReference type="InterPro" id="IPR033603">
    <property type="entry name" value="CEP44"/>
</dbReference>
<dbReference type="InterPro" id="IPR029157">
    <property type="entry name" value="CEP44_CC"/>
</dbReference>
<dbReference type="PANTHER" id="PTHR31477">
    <property type="entry name" value="CENTROSOMAL PROTEIN OF 44 KDA"/>
    <property type="match status" value="1"/>
</dbReference>
<dbReference type="PANTHER" id="PTHR31477:SF1">
    <property type="entry name" value="CENTROSOMAL PROTEIN OF 44 KDA"/>
    <property type="match status" value="1"/>
</dbReference>
<dbReference type="Pfam" id="PF15007">
    <property type="entry name" value="CEP44"/>
    <property type="match status" value="1"/>
</dbReference>
<organism>
    <name type="scientific">Xenopus tropicalis</name>
    <name type="common">Western clawed frog</name>
    <name type="synonym">Silurana tropicalis</name>
    <dbReference type="NCBI Taxonomy" id="8364"/>
    <lineage>
        <taxon>Eukaryota</taxon>
        <taxon>Metazoa</taxon>
        <taxon>Chordata</taxon>
        <taxon>Craniata</taxon>
        <taxon>Vertebrata</taxon>
        <taxon>Euteleostomi</taxon>
        <taxon>Amphibia</taxon>
        <taxon>Batrachia</taxon>
        <taxon>Anura</taxon>
        <taxon>Pipoidea</taxon>
        <taxon>Pipidae</taxon>
        <taxon>Xenopodinae</taxon>
        <taxon>Xenopus</taxon>
        <taxon>Silurana</taxon>
    </lineage>
</organism>
<comment type="function">
    <text evidence="1">Centriole-enriched microtubule-binding protein involved in centriole biogenesis. In collaboration with CEP295 and POC1B, is required for the centriole-to-centrosome conversion by ensuring the formation of bona fide centriole wall. Functions as a linker component that maintains centrosome cohesion. Associates with CROCC and regulates its stability and localization to the centrosome.</text>
</comment>
<comment type="subunit">
    <text evidence="1">Binds to centriolar microtubules.</text>
</comment>
<comment type="subcellular location">
    <subcellularLocation>
        <location evidence="1">Cytoplasm</location>
        <location evidence="1">Cytoskeleton</location>
        <location evidence="1">Microtubule organizing center</location>
        <location evidence="1">Centrosome</location>
    </subcellularLocation>
    <subcellularLocation>
        <location evidence="1">Cytoplasm</location>
        <location evidence="1">Cytoskeleton</location>
        <location evidence="1">Microtubule organizing center</location>
        <location evidence="1">Centrosome</location>
        <location evidence="1">Centriole</location>
    </subcellularLocation>
    <subcellularLocation>
        <location evidence="1">Cytoplasm</location>
        <location evidence="1">Cytoskeleton</location>
        <location evidence="1">Spindle pole</location>
    </subcellularLocation>
    <subcellularLocation>
        <location evidence="1">Midbody</location>
    </subcellularLocation>
    <text evidence="1">Localizes to the proximal end of mother and daughter centrioles.</text>
</comment>
<evidence type="ECO:0000250" key="1">
    <source>
        <dbReference type="UniProtKB" id="Q9C0F1"/>
    </source>
</evidence>
<evidence type="ECO:0000255" key="2"/>
<evidence type="ECO:0000256" key="3">
    <source>
        <dbReference type="SAM" id="MobiDB-lite"/>
    </source>
</evidence>